<organism>
    <name type="scientific">Burkholderia multivorans (strain ATCC 17616 / 249)</name>
    <dbReference type="NCBI Taxonomy" id="395019"/>
    <lineage>
        <taxon>Bacteria</taxon>
        <taxon>Pseudomonadati</taxon>
        <taxon>Pseudomonadota</taxon>
        <taxon>Betaproteobacteria</taxon>
        <taxon>Burkholderiales</taxon>
        <taxon>Burkholderiaceae</taxon>
        <taxon>Burkholderia</taxon>
        <taxon>Burkholderia cepacia complex</taxon>
    </lineage>
</organism>
<gene>
    <name evidence="1" type="primary">plsY</name>
    <name type="ordered locus">Bmul_0740</name>
    <name type="ordered locus">BMULJ_02520</name>
</gene>
<sequence length="212" mass="22390">MQILLAALIAYLIGSVSFAVIVSAAMGLADPRSYGSKNPGATNVLRSGNKKAAILTLIGDAFKGWIAVWLARRYGLPDVAIAWVAIAVFIGHLYPVFFRFQGGKGVATAAGVLLAVHPVLGLATALTWLIIAFFFRYSSLAALVAAVFAPLFDVFLFGTNHNPIAWAVLAMSVLLVWRHRGNIAKLLAGEESRIGDKKKAAANGNAQDGGKA</sequence>
<proteinExistence type="inferred from homology"/>
<evidence type="ECO:0000255" key="1">
    <source>
        <dbReference type="HAMAP-Rule" id="MF_01043"/>
    </source>
</evidence>
<keyword id="KW-0997">Cell inner membrane</keyword>
<keyword id="KW-1003">Cell membrane</keyword>
<keyword id="KW-0444">Lipid biosynthesis</keyword>
<keyword id="KW-0443">Lipid metabolism</keyword>
<keyword id="KW-0472">Membrane</keyword>
<keyword id="KW-0594">Phospholipid biosynthesis</keyword>
<keyword id="KW-1208">Phospholipid metabolism</keyword>
<keyword id="KW-1185">Reference proteome</keyword>
<keyword id="KW-0808">Transferase</keyword>
<keyword id="KW-0812">Transmembrane</keyword>
<keyword id="KW-1133">Transmembrane helix</keyword>
<feature type="chain" id="PRO_1000136070" description="Glycerol-3-phosphate acyltransferase">
    <location>
        <begin position="1"/>
        <end position="212"/>
    </location>
</feature>
<feature type="transmembrane region" description="Helical" evidence="1">
    <location>
        <begin position="3"/>
        <end position="23"/>
    </location>
</feature>
<feature type="transmembrane region" description="Helical" evidence="1">
    <location>
        <begin position="51"/>
        <end position="71"/>
    </location>
</feature>
<feature type="transmembrane region" description="Helical" evidence="1">
    <location>
        <begin position="78"/>
        <end position="98"/>
    </location>
</feature>
<feature type="transmembrane region" description="Helical" evidence="1">
    <location>
        <begin position="115"/>
        <end position="135"/>
    </location>
</feature>
<feature type="transmembrane region" description="Helical" evidence="1">
    <location>
        <begin position="139"/>
        <end position="159"/>
    </location>
</feature>
<comment type="function">
    <text evidence="1">Catalyzes the transfer of an acyl group from acyl-phosphate (acyl-PO(4)) to glycerol-3-phosphate (G3P) to form lysophosphatidic acid (LPA). This enzyme utilizes acyl-phosphate as fatty acyl donor, but not acyl-CoA or acyl-ACP.</text>
</comment>
<comment type="catalytic activity">
    <reaction evidence="1">
        <text>an acyl phosphate + sn-glycerol 3-phosphate = a 1-acyl-sn-glycero-3-phosphate + phosphate</text>
        <dbReference type="Rhea" id="RHEA:34075"/>
        <dbReference type="ChEBI" id="CHEBI:43474"/>
        <dbReference type="ChEBI" id="CHEBI:57597"/>
        <dbReference type="ChEBI" id="CHEBI:57970"/>
        <dbReference type="ChEBI" id="CHEBI:59918"/>
        <dbReference type="EC" id="2.3.1.275"/>
    </reaction>
</comment>
<comment type="pathway">
    <text evidence="1">Lipid metabolism; phospholipid metabolism.</text>
</comment>
<comment type="subunit">
    <text evidence="1">Probably interacts with PlsX.</text>
</comment>
<comment type="subcellular location">
    <subcellularLocation>
        <location evidence="1">Cell inner membrane</location>
        <topology evidence="1">Multi-pass membrane protein</topology>
    </subcellularLocation>
</comment>
<comment type="similarity">
    <text evidence="1">Belongs to the PlsY family.</text>
</comment>
<accession>A9AGJ3</accession>
<name>PLSY_BURM1</name>
<protein>
    <recommendedName>
        <fullName evidence="1">Glycerol-3-phosphate acyltransferase</fullName>
    </recommendedName>
    <alternativeName>
        <fullName evidence="1">Acyl-PO4 G3P acyltransferase</fullName>
    </alternativeName>
    <alternativeName>
        <fullName evidence="1">Acyl-phosphate--glycerol-3-phosphate acyltransferase</fullName>
    </alternativeName>
    <alternativeName>
        <fullName evidence="1">G3P acyltransferase</fullName>
        <shortName evidence="1">GPAT</shortName>
        <ecNumber evidence="1">2.3.1.275</ecNumber>
    </alternativeName>
    <alternativeName>
        <fullName evidence="1">Lysophosphatidic acid synthase</fullName>
        <shortName evidence="1">LPA synthase</shortName>
    </alternativeName>
</protein>
<reference key="1">
    <citation type="submission" date="2007-10" db="EMBL/GenBank/DDBJ databases">
        <title>Complete sequence of chromosome 1 of Burkholderia multivorans ATCC 17616.</title>
        <authorList>
            <person name="Copeland A."/>
            <person name="Lucas S."/>
            <person name="Lapidus A."/>
            <person name="Barry K."/>
            <person name="Glavina del Rio T."/>
            <person name="Dalin E."/>
            <person name="Tice H."/>
            <person name="Pitluck S."/>
            <person name="Chain P."/>
            <person name="Malfatti S."/>
            <person name="Shin M."/>
            <person name="Vergez L."/>
            <person name="Schmutz J."/>
            <person name="Larimer F."/>
            <person name="Land M."/>
            <person name="Hauser L."/>
            <person name="Kyrpides N."/>
            <person name="Kim E."/>
            <person name="Tiedje J."/>
            <person name="Richardson P."/>
        </authorList>
    </citation>
    <scope>NUCLEOTIDE SEQUENCE [LARGE SCALE GENOMIC DNA]</scope>
    <source>
        <strain>ATCC 17616 / 249</strain>
    </source>
</reference>
<reference key="2">
    <citation type="submission" date="2007-04" db="EMBL/GenBank/DDBJ databases">
        <title>Complete genome sequence of Burkholderia multivorans ATCC 17616.</title>
        <authorList>
            <person name="Ohtsubo Y."/>
            <person name="Yamashita A."/>
            <person name="Kurokawa K."/>
            <person name="Takami H."/>
            <person name="Yuhara S."/>
            <person name="Nishiyama E."/>
            <person name="Endo R."/>
            <person name="Miyazaki R."/>
            <person name="Ono A."/>
            <person name="Yano K."/>
            <person name="Ito M."/>
            <person name="Sota M."/>
            <person name="Yuji N."/>
            <person name="Hattori M."/>
            <person name="Tsuda M."/>
        </authorList>
    </citation>
    <scope>NUCLEOTIDE SEQUENCE [LARGE SCALE GENOMIC DNA]</scope>
    <source>
        <strain>ATCC 17616 / 249</strain>
    </source>
</reference>
<dbReference type="EC" id="2.3.1.275" evidence="1"/>
<dbReference type="EMBL" id="CP000868">
    <property type="protein sequence ID" value="ABX14435.1"/>
    <property type="molecule type" value="Genomic_DNA"/>
</dbReference>
<dbReference type="EMBL" id="AP009385">
    <property type="protein sequence ID" value="BAG44411.1"/>
    <property type="molecule type" value="Genomic_DNA"/>
</dbReference>
<dbReference type="RefSeq" id="WP_012212836.1">
    <property type="nucleotide sequence ID" value="NC_010804.1"/>
</dbReference>
<dbReference type="SMR" id="A9AGJ3"/>
<dbReference type="STRING" id="395019.BMULJ_02520"/>
<dbReference type="KEGG" id="bmj:BMULJ_02520"/>
<dbReference type="KEGG" id="bmu:Bmul_0740"/>
<dbReference type="eggNOG" id="COG0344">
    <property type="taxonomic scope" value="Bacteria"/>
</dbReference>
<dbReference type="HOGENOM" id="CLU_081254_0_0_4"/>
<dbReference type="UniPathway" id="UPA00085"/>
<dbReference type="Proteomes" id="UP000008815">
    <property type="component" value="Chromosome 1"/>
</dbReference>
<dbReference type="GO" id="GO:0005886">
    <property type="term" value="C:plasma membrane"/>
    <property type="evidence" value="ECO:0007669"/>
    <property type="project" value="UniProtKB-SubCell"/>
</dbReference>
<dbReference type="GO" id="GO:0043772">
    <property type="term" value="F:acyl-phosphate glycerol-3-phosphate acyltransferase activity"/>
    <property type="evidence" value="ECO:0007669"/>
    <property type="project" value="UniProtKB-UniRule"/>
</dbReference>
<dbReference type="GO" id="GO:0008654">
    <property type="term" value="P:phospholipid biosynthetic process"/>
    <property type="evidence" value="ECO:0007669"/>
    <property type="project" value="UniProtKB-UniRule"/>
</dbReference>
<dbReference type="HAMAP" id="MF_01043">
    <property type="entry name" value="PlsY"/>
    <property type="match status" value="1"/>
</dbReference>
<dbReference type="InterPro" id="IPR003811">
    <property type="entry name" value="G3P_acylTferase_PlsY"/>
</dbReference>
<dbReference type="NCBIfam" id="TIGR00023">
    <property type="entry name" value="glycerol-3-phosphate 1-O-acyltransferase PlsY"/>
    <property type="match status" value="1"/>
</dbReference>
<dbReference type="PANTHER" id="PTHR30309:SF0">
    <property type="entry name" value="GLYCEROL-3-PHOSPHATE ACYLTRANSFERASE-RELATED"/>
    <property type="match status" value="1"/>
</dbReference>
<dbReference type="PANTHER" id="PTHR30309">
    <property type="entry name" value="INNER MEMBRANE PROTEIN YGIH"/>
    <property type="match status" value="1"/>
</dbReference>
<dbReference type="Pfam" id="PF02660">
    <property type="entry name" value="G3P_acyltransf"/>
    <property type="match status" value="1"/>
</dbReference>
<dbReference type="SMART" id="SM01207">
    <property type="entry name" value="G3P_acyltransf"/>
    <property type="match status" value="1"/>
</dbReference>